<evidence type="ECO:0000255" key="1">
    <source>
        <dbReference type="HAMAP-Rule" id="MF_00213"/>
    </source>
</evidence>
<evidence type="ECO:0000305" key="2"/>
<gene>
    <name evidence="1" type="primary">hypA</name>
</gene>
<feature type="chain" id="PRO_0000129033" description="Hydrogenase maturation factor HypA">
    <location>
        <begin position="1"/>
        <end position="113"/>
    </location>
</feature>
<feature type="binding site" evidence="1">
    <location>
        <position position="2"/>
    </location>
    <ligand>
        <name>Ni(2+)</name>
        <dbReference type="ChEBI" id="CHEBI:49786"/>
    </ligand>
</feature>
<feature type="binding site" evidence="1">
    <location>
        <position position="73"/>
    </location>
    <ligand>
        <name>Zn(2+)</name>
        <dbReference type="ChEBI" id="CHEBI:29105"/>
    </ligand>
</feature>
<feature type="binding site" evidence="1">
    <location>
        <position position="76"/>
    </location>
    <ligand>
        <name>Zn(2+)</name>
        <dbReference type="ChEBI" id="CHEBI:29105"/>
    </ligand>
</feature>
<feature type="binding site" evidence="1">
    <location>
        <position position="89"/>
    </location>
    <ligand>
        <name>Zn(2+)</name>
        <dbReference type="ChEBI" id="CHEBI:29105"/>
    </ligand>
</feature>
<feature type="binding site" evidence="1">
    <location>
        <position position="92"/>
    </location>
    <ligand>
        <name>Zn(2+)</name>
        <dbReference type="ChEBI" id="CHEBI:29105"/>
    </ligand>
</feature>
<reference key="1">
    <citation type="journal article" date="1992" name="Biochim. Biophys. Acta">
        <title>Identification of six open reading frames from a region of the Azotobacter vinelandii genome likely involved in dihydrogen metabolism.</title>
        <authorList>
            <person name="Chen J.C."/>
            <person name="Mortenson L.E."/>
        </authorList>
    </citation>
    <scope>NUCLEOTIDE SEQUENCE [GENOMIC DNA]</scope>
    <source>
        <strain>ATCC 13705 / OP1 / DSM 366 / NCIMB 11614 / LMG 3878 / UW</strain>
    </source>
</reference>
<dbReference type="EMBL" id="X63650">
    <property type="protein sequence ID" value="CAA45183.1"/>
    <property type="molecule type" value="Genomic_DNA"/>
</dbReference>
<dbReference type="EMBL" id="L23970">
    <property type="protein sequence ID" value="AAA19508.1"/>
    <property type="molecule type" value="Unassigned_DNA"/>
</dbReference>
<dbReference type="PIR" id="S23439">
    <property type="entry name" value="S23439"/>
</dbReference>
<dbReference type="SMR" id="P31879"/>
<dbReference type="GO" id="GO:0016151">
    <property type="term" value="F:nickel cation binding"/>
    <property type="evidence" value="ECO:0007669"/>
    <property type="project" value="UniProtKB-UniRule"/>
</dbReference>
<dbReference type="GO" id="GO:0008270">
    <property type="term" value="F:zinc ion binding"/>
    <property type="evidence" value="ECO:0007669"/>
    <property type="project" value="UniProtKB-UniRule"/>
</dbReference>
<dbReference type="GO" id="GO:0051604">
    <property type="term" value="P:protein maturation"/>
    <property type="evidence" value="ECO:0007669"/>
    <property type="project" value="InterPro"/>
</dbReference>
<dbReference type="GO" id="GO:0036211">
    <property type="term" value="P:protein modification process"/>
    <property type="evidence" value="ECO:0007669"/>
    <property type="project" value="UniProtKB-UniRule"/>
</dbReference>
<dbReference type="FunFam" id="3.30.2320.80:FF:000001">
    <property type="entry name" value="Hydrogenase maturation factor HypA"/>
    <property type="match status" value="1"/>
</dbReference>
<dbReference type="Gene3D" id="3.30.2320.80">
    <property type="match status" value="1"/>
</dbReference>
<dbReference type="HAMAP" id="MF_00213">
    <property type="entry name" value="HypA_HybF"/>
    <property type="match status" value="1"/>
</dbReference>
<dbReference type="InterPro" id="IPR020538">
    <property type="entry name" value="Hydgase_Ni_incorp_HypA/HybF_CS"/>
</dbReference>
<dbReference type="InterPro" id="IPR000688">
    <property type="entry name" value="HypA/HybF"/>
</dbReference>
<dbReference type="NCBIfam" id="TIGR00100">
    <property type="entry name" value="hypA"/>
    <property type="match status" value="1"/>
</dbReference>
<dbReference type="NCBIfam" id="NF009046">
    <property type="entry name" value="PRK12380.1"/>
    <property type="match status" value="1"/>
</dbReference>
<dbReference type="PANTHER" id="PTHR34535">
    <property type="entry name" value="HYDROGENASE MATURATION FACTOR HYPA"/>
    <property type="match status" value="1"/>
</dbReference>
<dbReference type="PANTHER" id="PTHR34535:SF3">
    <property type="entry name" value="HYDROGENASE MATURATION FACTOR HYPA"/>
    <property type="match status" value="1"/>
</dbReference>
<dbReference type="Pfam" id="PF01155">
    <property type="entry name" value="HypA"/>
    <property type="match status" value="1"/>
</dbReference>
<dbReference type="PIRSF" id="PIRSF004761">
    <property type="entry name" value="Hydrgn_mat_HypA"/>
    <property type="match status" value="1"/>
</dbReference>
<dbReference type="PROSITE" id="PS01249">
    <property type="entry name" value="HYPA"/>
    <property type="match status" value="1"/>
</dbReference>
<name>HYPA_AZOVI</name>
<organism>
    <name type="scientific">Azotobacter vinelandii</name>
    <dbReference type="NCBI Taxonomy" id="354"/>
    <lineage>
        <taxon>Bacteria</taxon>
        <taxon>Pseudomonadati</taxon>
        <taxon>Pseudomonadota</taxon>
        <taxon>Gammaproteobacteria</taxon>
        <taxon>Pseudomonadales</taxon>
        <taxon>Pseudomonadaceae</taxon>
        <taxon>Azotobacter</taxon>
    </lineage>
</organism>
<proteinExistence type="inferred from homology"/>
<accession>P31879</accession>
<protein>
    <recommendedName>
        <fullName evidence="1">Hydrogenase maturation factor HypA</fullName>
    </recommendedName>
</protein>
<keyword id="KW-0479">Metal-binding</keyword>
<keyword id="KW-0533">Nickel</keyword>
<keyword id="KW-0862">Zinc</keyword>
<sequence>MHEMSIAEGIVQLLEEQAVAQDFTRVRALWLEIGPLAAIEVESLRFCFEAVTRGSLAEGARLEIVELPGRAWCLGCNASVAIRRRYDACPQCGSHRLQVTQGDELRVKELEVE</sequence>
<comment type="function">
    <text evidence="1">Involved in the maturation of [NiFe] hydrogenases. Required for nickel insertion into the metal center of the hydrogenase.</text>
</comment>
<comment type="similarity">
    <text evidence="1 2">Belongs to the HypA/HybF family.</text>
</comment>